<keyword id="KW-0067">ATP-binding</keyword>
<keyword id="KW-0131">Cell cycle</keyword>
<keyword id="KW-0132">Cell division</keyword>
<keyword id="KW-0133">Cell shape</keyword>
<keyword id="KW-0961">Cell wall biogenesis/degradation</keyword>
<keyword id="KW-0963">Cytoplasm</keyword>
<keyword id="KW-0436">Ligase</keyword>
<keyword id="KW-0547">Nucleotide-binding</keyword>
<keyword id="KW-0573">Peptidoglycan synthesis</keyword>
<reference key="1">
    <citation type="journal article" date="2002" name="Proc. Natl. Acad. Sci. U.S.A.">
        <title>The Brucella suis genome reveals fundamental similarities between animal and plant pathogens and symbionts.</title>
        <authorList>
            <person name="Paulsen I.T."/>
            <person name="Seshadri R."/>
            <person name="Nelson K.E."/>
            <person name="Eisen J.A."/>
            <person name="Heidelberg J.F."/>
            <person name="Read T.D."/>
            <person name="Dodson R.J."/>
            <person name="Umayam L.A."/>
            <person name="Brinkac L.M."/>
            <person name="Beanan M.J."/>
            <person name="Daugherty S.C."/>
            <person name="DeBoy R.T."/>
            <person name="Durkin A.S."/>
            <person name="Kolonay J.F."/>
            <person name="Madupu R."/>
            <person name="Nelson W.C."/>
            <person name="Ayodeji B."/>
            <person name="Kraul M."/>
            <person name="Shetty J."/>
            <person name="Malek J.A."/>
            <person name="Van Aken S.E."/>
            <person name="Riedmuller S."/>
            <person name="Tettelin H."/>
            <person name="Gill S.R."/>
            <person name="White O."/>
            <person name="Salzberg S.L."/>
            <person name="Hoover D.L."/>
            <person name="Lindler L.E."/>
            <person name="Halling S.M."/>
            <person name="Boyle S.M."/>
            <person name="Fraser C.M."/>
        </authorList>
    </citation>
    <scope>NUCLEOTIDE SEQUENCE [LARGE SCALE GENOMIC DNA]</scope>
    <source>
        <strain>1330</strain>
    </source>
</reference>
<reference key="2">
    <citation type="journal article" date="2011" name="J. Bacteriol.">
        <title>Revised genome sequence of Brucella suis 1330.</title>
        <authorList>
            <person name="Tae H."/>
            <person name="Shallom S."/>
            <person name="Settlage R."/>
            <person name="Preston D."/>
            <person name="Adams L.G."/>
            <person name="Garner H.R."/>
        </authorList>
    </citation>
    <scope>NUCLEOTIDE SEQUENCE [LARGE SCALE GENOMIC DNA]</scope>
    <source>
        <strain>1330</strain>
    </source>
</reference>
<protein>
    <recommendedName>
        <fullName evidence="1">UDP-N-acetylmuramoylalanine--D-glutamate ligase</fullName>
        <ecNumber evidence="1">6.3.2.9</ecNumber>
    </recommendedName>
    <alternativeName>
        <fullName evidence="1">D-glutamic acid-adding enzyme</fullName>
    </alternativeName>
    <alternativeName>
        <fullName evidence="1">UDP-N-acetylmuramoyl-L-alanyl-D-glutamate synthetase</fullName>
    </alternativeName>
</protein>
<evidence type="ECO:0000255" key="1">
    <source>
        <dbReference type="HAMAP-Rule" id="MF_00639"/>
    </source>
</evidence>
<organism>
    <name type="scientific">Brucella suis biovar 1 (strain 1330)</name>
    <dbReference type="NCBI Taxonomy" id="204722"/>
    <lineage>
        <taxon>Bacteria</taxon>
        <taxon>Pseudomonadati</taxon>
        <taxon>Pseudomonadota</taxon>
        <taxon>Alphaproteobacteria</taxon>
        <taxon>Hyphomicrobiales</taxon>
        <taxon>Brucellaceae</taxon>
        <taxon>Brucella/Ochrobactrum group</taxon>
        <taxon>Brucella</taxon>
    </lineage>
</organism>
<feature type="chain" id="PRO_0000108983" description="UDP-N-acetylmuramoylalanine--D-glutamate ligase">
    <location>
        <begin position="1"/>
        <end position="467"/>
    </location>
</feature>
<feature type="binding site" evidence="1">
    <location>
        <begin position="121"/>
        <end position="127"/>
    </location>
    <ligand>
        <name>ATP</name>
        <dbReference type="ChEBI" id="CHEBI:30616"/>
    </ligand>
</feature>
<sequence>MIPITALKDKTVALFGLGGSGIATAKAIVAGGARIIAWDDNPDSVARAQSAGIATGDLRQADWSQFAVFVLSPGVPLTHPQPHWSVDLARAAGVEIIGDVELFVRERNHIAPDCPFIAITGTNGKSTTTALIAHIIKATGRDMQLGGNIGTAILTLEPPCADRFYVVECSSYQIDLAPSLNPTAGILLNLTPDHLDRHGSMENYAAIKERLVAASGTAIIGIDDAYCQAIADRLHGAGIRVVRISKEKHLDRGYFADGAKLLWAQDGEIDEIASLEGIGSLRGAHNAQNALAAIVACLSAGLSLEEIHAGLKSFPGLAHRMEQVGRRGKVLFVNDSKATNAEATAPALSSFPQNIYWIVGGVPKAGGINSLTAFFPRVAKAYLIGEAAAQFAATLGGAVPFEISDTLAAAVAHAAGDAGNDAAPEPVVLLSPACASFDQFQNFEKRGDAFRDAVLALPGVMPMRGES</sequence>
<dbReference type="EC" id="6.3.2.9" evidence="1"/>
<dbReference type="EMBL" id="AE014291">
    <property type="protein sequence ID" value="AAN30346.1"/>
    <property type="molecule type" value="Genomic_DNA"/>
</dbReference>
<dbReference type="EMBL" id="CP002997">
    <property type="protein sequence ID" value="AEM18762.1"/>
    <property type="molecule type" value="Genomic_DNA"/>
</dbReference>
<dbReference type="RefSeq" id="WP_002967802.1">
    <property type="nucleotide sequence ID" value="NZ_KN046804.1"/>
</dbReference>
<dbReference type="SMR" id="Q8FZP2"/>
<dbReference type="GeneID" id="55591085"/>
<dbReference type="KEGG" id="bms:BR1433"/>
<dbReference type="KEGG" id="bsi:BS1330_I1427"/>
<dbReference type="PATRIC" id="fig|204722.21.peg.921"/>
<dbReference type="HOGENOM" id="CLU_032540_3_0_5"/>
<dbReference type="PhylomeDB" id="Q8FZP2"/>
<dbReference type="UniPathway" id="UPA00219"/>
<dbReference type="Proteomes" id="UP000007104">
    <property type="component" value="Chromosome I"/>
</dbReference>
<dbReference type="GO" id="GO:0005737">
    <property type="term" value="C:cytoplasm"/>
    <property type="evidence" value="ECO:0007669"/>
    <property type="project" value="UniProtKB-SubCell"/>
</dbReference>
<dbReference type="GO" id="GO:0005524">
    <property type="term" value="F:ATP binding"/>
    <property type="evidence" value="ECO:0007669"/>
    <property type="project" value="UniProtKB-UniRule"/>
</dbReference>
<dbReference type="GO" id="GO:0004326">
    <property type="term" value="F:tetrahydrofolylpolyglutamate synthase activity"/>
    <property type="evidence" value="ECO:0007669"/>
    <property type="project" value="InterPro"/>
</dbReference>
<dbReference type="GO" id="GO:0008764">
    <property type="term" value="F:UDP-N-acetylmuramoylalanine-D-glutamate ligase activity"/>
    <property type="evidence" value="ECO:0007669"/>
    <property type="project" value="UniProtKB-UniRule"/>
</dbReference>
<dbReference type="GO" id="GO:0051301">
    <property type="term" value="P:cell division"/>
    <property type="evidence" value="ECO:0007669"/>
    <property type="project" value="UniProtKB-KW"/>
</dbReference>
<dbReference type="GO" id="GO:0071555">
    <property type="term" value="P:cell wall organization"/>
    <property type="evidence" value="ECO:0007669"/>
    <property type="project" value="UniProtKB-KW"/>
</dbReference>
<dbReference type="GO" id="GO:0009252">
    <property type="term" value="P:peptidoglycan biosynthetic process"/>
    <property type="evidence" value="ECO:0007669"/>
    <property type="project" value="UniProtKB-UniRule"/>
</dbReference>
<dbReference type="GO" id="GO:0008360">
    <property type="term" value="P:regulation of cell shape"/>
    <property type="evidence" value="ECO:0007669"/>
    <property type="project" value="UniProtKB-KW"/>
</dbReference>
<dbReference type="Gene3D" id="3.90.190.20">
    <property type="entry name" value="Mur ligase, C-terminal domain"/>
    <property type="match status" value="1"/>
</dbReference>
<dbReference type="Gene3D" id="3.40.1190.10">
    <property type="entry name" value="Mur-like, catalytic domain"/>
    <property type="match status" value="1"/>
</dbReference>
<dbReference type="Gene3D" id="3.40.50.720">
    <property type="entry name" value="NAD(P)-binding Rossmann-like Domain"/>
    <property type="match status" value="1"/>
</dbReference>
<dbReference type="HAMAP" id="MF_00639">
    <property type="entry name" value="MurD"/>
    <property type="match status" value="1"/>
</dbReference>
<dbReference type="InterPro" id="IPR018109">
    <property type="entry name" value="Folylpolyglutamate_synth_CS"/>
</dbReference>
<dbReference type="InterPro" id="IPR036565">
    <property type="entry name" value="Mur-like_cat_sf"/>
</dbReference>
<dbReference type="InterPro" id="IPR004101">
    <property type="entry name" value="Mur_ligase_C"/>
</dbReference>
<dbReference type="InterPro" id="IPR036615">
    <property type="entry name" value="Mur_ligase_C_dom_sf"/>
</dbReference>
<dbReference type="InterPro" id="IPR013221">
    <property type="entry name" value="Mur_ligase_cen"/>
</dbReference>
<dbReference type="InterPro" id="IPR005762">
    <property type="entry name" value="MurD"/>
</dbReference>
<dbReference type="InterPro" id="IPR036291">
    <property type="entry name" value="NAD(P)-bd_dom_sf"/>
</dbReference>
<dbReference type="NCBIfam" id="TIGR01087">
    <property type="entry name" value="murD"/>
    <property type="match status" value="1"/>
</dbReference>
<dbReference type="PANTHER" id="PTHR43692">
    <property type="entry name" value="UDP-N-ACETYLMURAMOYLALANINE--D-GLUTAMATE LIGASE"/>
    <property type="match status" value="1"/>
</dbReference>
<dbReference type="PANTHER" id="PTHR43692:SF1">
    <property type="entry name" value="UDP-N-ACETYLMURAMOYLALANINE--D-GLUTAMATE LIGASE"/>
    <property type="match status" value="1"/>
</dbReference>
<dbReference type="Pfam" id="PF02875">
    <property type="entry name" value="Mur_ligase_C"/>
    <property type="match status" value="1"/>
</dbReference>
<dbReference type="Pfam" id="PF08245">
    <property type="entry name" value="Mur_ligase_M"/>
    <property type="match status" value="1"/>
</dbReference>
<dbReference type="SUPFAM" id="SSF53623">
    <property type="entry name" value="MurD-like peptide ligases, catalytic domain"/>
    <property type="match status" value="1"/>
</dbReference>
<dbReference type="SUPFAM" id="SSF53244">
    <property type="entry name" value="MurD-like peptide ligases, peptide-binding domain"/>
    <property type="match status" value="1"/>
</dbReference>
<dbReference type="SUPFAM" id="SSF51735">
    <property type="entry name" value="NAD(P)-binding Rossmann-fold domains"/>
    <property type="match status" value="1"/>
</dbReference>
<gene>
    <name evidence="1" type="primary">murD</name>
    <name type="ordered locus">BR1433</name>
    <name type="ordered locus">BS1330_I1427</name>
</gene>
<name>MURD_BRUSU</name>
<comment type="function">
    <text evidence="1">Cell wall formation. Catalyzes the addition of glutamate to the nucleotide precursor UDP-N-acetylmuramoyl-L-alanine (UMA).</text>
</comment>
<comment type="catalytic activity">
    <reaction evidence="1">
        <text>UDP-N-acetyl-alpha-D-muramoyl-L-alanine + D-glutamate + ATP = UDP-N-acetyl-alpha-D-muramoyl-L-alanyl-D-glutamate + ADP + phosphate + H(+)</text>
        <dbReference type="Rhea" id="RHEA:16429"/>
        <dbReference type="ChEBI" id="CHEBI:15378"/>
        <dbReference type="ChEBI" id="CHEBI:29986"/>
        <dbReference type="ChEBI" id="CHEBI:30616"/>
        <dbReference type="ChEBI" id="CHEBI:43474"/>
        <dbReference type="ChEBI" id="CHEBI:83898"/>
        <dbReference type="ChEBI" id="CHEBI:83900"/>
        <dbReference type="ChEBI" id="CHEBI:456216"/>
        <dbReference type="EC" id="6.3.2.9"/>
    </reaction>
</comment>
<comment type="pathway">
    <text evidence="1">Cell wall biogenesis; peptidoglycan biosynthesis.</text>
</comment>
<comment type="subcellular location">
    <subcellularLocation>
        <location evidence="1">Cytoplasm</location>
    </subcellularLocation>
</comment>
<comment type="similarity">
    <text evidence="1">Belongs to the MurCDEF family.</text>
</comment>
<proteinExistence type="inferred from homology"/>
<accession>Q8FZP2</accession>
<accession>G0KBJ3</accession>